<protein>
    <recommendedName>
        <fullName evidence="1">6,7-dimethyl-8-ribityllumazine synthase</fullName>
        <shortName evidence="1">DMRL synthase</shortName>
        <shortName evidence="1">LS</shortName>
        <shortName evidence="1">Lumazine synthase</shortName>
        <ecNumber evidence="1">2.5.1.78</ecNumber>
    </recommendedName>
</protein>
<dbReference type="EC" id="2.5.1.78" evidence="1"/>
<dbReference type="EMBL" id="CR378665">
    <property type="protein sequence ID" value="CAG19213.1"/>
    <property type="molecule type" value="Genomic_DNA"/>
</dbReference>
<dbReference type="SMR" id="Q6LU12"/>
<dbReference type="STRING" id="298386.PBPRA0800"/>
<dbReference type="KEGG" id="ppr:PBPRA0800"/>
<dbReference type="eggNOG" id="COG0054">
    <property type="taxonomic scope" value="Bacteria"/>
</dbReference>
<dbReference type="HOGENOM" id="CLU_089358_1_1_6"/>
<dbReference type="UniPathway" id="UPA00275">
    <property type="reaction ID" value="UER00404"/>
</dbReference>
<dbReference type="Proteomes" id="UP000000593">
    <property type="component" value="Chromosome 1"/>
</dbReference>
<dbReference type="GO" id="GO:0005829">
    <property type="term" value="C:cytosol"/>
    <property type="evidence" value="ECO:0007669"/>
    <property type="project" value="TreeGrafter"/>
</dbReference>
<dbReference type="GO" id="GO:0009349">
    <property type="term" value="C:riboflavin synthase complex"/>
    <property type="evidence" value="ECO:0007669"/>
    <property type="project" value="InterPro"/>
</dbReference>
<dbReference type="GO" id="GO:0000906">
    <property type="term" value="F:6,7-dimethyl-8-ribityllumazine synthase activity"/>
    <property type="evidence" value="ECO:0007669"/>
    <property type="project" value="UniProtKB-UniRule"/>
</dbReference>
<dbReference type="GO" id="GO:0009231">
    <property type="term" value="P:riboflavin biosynthetic process"/>
    <property type="evidence" value="ECO:0007669"/>
    <property type="project" value="UniProtKB-UniRule"/>
</dbReference>
<dbReference type="CDD" id="cd09209">
    <property type="entry name" value="Lumazine_synthase-I"/>
    <property type="match status" value="1"/>
</dbReference>
<dbReference type="FunFam" id="3.40.50.960:FF:000001">
    <property type="entry name" value="6,7-dimethyl-8-ribityllumazine synthase"/>
    <property type="match status" value="1"/>
</dbReference>
<dbReference type="Gene3D" id="3.40.50.960">
    <property type="entry name" value="Lumazine/riboflavin synthase"/>
    <property type="match status" value="1"/>
</dbReference>
<dbReference type="HAMAP" id="MF_00178">
    <property type="entry name" value="Lumazine_synth"/>
    <property type="match status" value="1"/>
</dbReference>
<dbReference type="InterPro" id="IPR034964">
    <property type="entry name" value="LS"/>
</dbReference>
<dbReference type="InterPro" id="IPR002180">
    <property type="entry name" value="LS/RS"/>
</dbReference>
<dbReference type="InterPro" id="IPR036467">
    <property type="entry name" value="LS/RS_sf"/>
</dbReference>
<dbReference type="NCBIfam" id="TIGR00114">
    <property type="entry name" value="lumazine-synth"/>
    <property type="match status" value="1"/>
</dbReference>
<dbReference type="NCBIfam" id="NF000812">
    <property type="entry name" value="PRK00061.1-4"/>
    <property type="match status" value="1"/>
</dbReference>
<dbReference type="PANTHER" id="PTHR21058:SF0">
    <property type="entry name" value="6,7-DIMETHYL-8-RIBITYLLUMAZINE SYNTHASE"/>
    <property type="match status" value="1"/>
</dbReference>
<dbReference type="PANTHER" id="PTHR21058">
    <property type="entry name" value="6,7-DIMETHYL-8-RIBITYLLUMAZINE SYNTHASE DMRL SYNTHASE LUMAZINE SYNTHASE"/>
    <property type="match status" value="1"/>
</dbReference>
<dbReference type="Pfam" id="PF00885">
    <property type="entry name" value="DMRL_synthase"/>
    <property type="match status" value="1"/>
</dbReference>
<dbReference type="SUPFAM" id="SSF52121">
    <property type="entry name" value="Lumazine synthase"/>
    <property type="match status" value="1"/>
</dbReference>
<feature type="chain" id="PRO_1000040475" description="6,7-dimethyl-8-ribityllumazine synthase">
    <location>
        <begin position="1"/>
        <end position="156"/>
    </location>
</feature>
<feature type="active site" description="Proton donor" evidence="1">
    <location>
        <position position="89"/>
    </location>
</feature>
<feature type="binding site" evidence="1">
    <location>
        <position position="22"/>
    </location>
    <ligand>
        <name>5-amino-6-(D-ribitylamino)uracil</name>
        <dbReference type="ChEBI" id="CHEBI:15934"/>
    </ligand>
</feature>
<feature type="binding site" evidence="1">
    <location>
        <begin position="57"/>
        <end position="59"/>
    </location>
    <ligand>
        <name>5-amino-6-(D-ribitylamino)uracil</name>
        <dbReference type="ChEBI" id="CHEBI:15934"/>
    </ligand>
</feature>
<feature type="binding site" evidence="1">
    <location>
        <begin position="81"/>
        <end position="83"/>
    </location>
    <ligand>
        <name>5-amino-6-(D-ribitylamino)uracil</name>
        <dbReference type="ChEBI" id="CHEBI:15934"/>
    </ligand>
</feature>
<feature type="binding site" evidence="1">
    <location>
        <begin position="86"/>
        <end position="87"/>
    </location>
    <ligand>
        <name>(2S)-2-hydroxy-3-oxobutyl phosphate</name>
        <dbReference type="ChEBI" id="CHEBI:58830"/>
    </ligand>
</feature>
<feature type="binding site" evidence="1">
    <location>
        <position position="114"/>
    </location>
    <ligand>
        <name>5-amino-6-(D-ribitylamino)uracil</name>
        <dbReference type="ChEBI" id="CHEBI:15934"/>
    </ligand>
</feature>
<feature type="binding site" evidence="1">
    <location>
        <position position="128"/>
    </location>
    <ligand>
        <name>(2S)-2-hydroxy-3-oxobutyl phosphate</name>
        <dbReference type="ChEBI" id="CHEBI:58830"/>
    </ligand>
</feature>
<reference key="1">
    <citation type="journal article" date="2005" name="Science">
        <title>Life at depth: Photobacterium profundum genome sequence and expression analysis.</title>
        <authorList>
            <person name="Vezzi A."/>
            <person name="Campanaro S."/>
            <person name="D'Angelo M."/>
            <person name="Simonato F."/>
            <person name="Vitulo N."/>
            <person name="Lauro F.M."/>
            <person name="Cestaro A."/>
            <person name="Malacrida G."/>
            <person name="Simionati B."/>
            <person name="Cannata N."/>
            <person name="Romualdi C."/>
            <person name="Bartlett D.H."/>
            <person name="Valle G."/>
        </authorList>
    </citation>
    <scope>NUCLEOTIDE SEQUENCE [LARGE SCALE GENOMIC DNA]</scope>
    <source>
        <strain>ATCC BAA-1253 / SS9</strain>
    </source>
</reference>
<comment type="function">
    <text evidence="1">Catalyzes the formation of 6,7-dimethyl-8-ribityllumazine by condensation of 5-amino-6-(D-ribitylamino)uracil with 3,4-dihydroxy-2-butanone 4-phosphate. This is the penultimate step in the biosynthesis of riboflavin.</text>
</comment>
<comment type="catalytic activity">
    <reaction evidence="1">
        <text>(2S)-2-hydroxy-3-oxobutyl phosphate + 5-amino-6-(D-ribitylamino)uracil = 6,7-dimethyl-8-(1-D-ribityl)lumazine + phosphate + 2 H2O + H(+)</text>
        <dbReference type="Rhea" id="RHEA:26152"/>
        <dbReference type="ChEBI" id="CHEBI:15377"/>
        <dbReference type="ChEBI" id="CHEBI:15378"/>
        <dbReference type="ChEBI" id="CHEBI:15934"/>
        <dbReference type="ChEBI" id="CHEBI:43474"/>
        <dbReference type="ChEBI" id="CHEBI:58201"/>
        <dbReference type="ChEBI" id="CHEBI:58830"/>
        <dbReference type="EC" id="2.5.1.78"/>
    </reaction>
</comment>
<comment type="pathway">
    <text evidence="1">Cofactor biosynthesis; riboflavin biosynthesis; riboflavin from 2-hydroxy-3-oxobutyl phosphate and 5-amino-6-(D-ribitylamino)uracil: step 1/2.</text>
</comment>
<comment type="subunit">
    <text evidence="1">Forms an icosahedral capsid composed of 60 subunits, arranged as a dodecamer of pentamers.</text>
</comment>
<comment type="similarity">
    <text evidence="1">Belongs to the DMRL synthase family.</text>
</comment>
<evidence type="ECO:0000255" key="1">
    <source>
        <dbReference type="HAMAP-Rule" id="MF_00178"/>
    </source>
</evidence>
<gene>
    <name evidence="1" type="primary">ribH</name>
    <name type="ordered locus">PBPRA0800</name>
</gene>
<sequence>MNVIEGAIAAPNAKIAIVIARFNSFINESLLAGALDALKRQGQVSDDNITVVRCPGAYELPLVAQQVAKSDRYDAIVALGSVIRGGTPHFDYVAGECNKGLAQVALEYNTPVAFGVLTVDSIEQAIERAGTKAGNKGAEAALSALEMVNVLSQIES</sequence>
<name>RISB_PHOPR</name>
<keyword id="KW-1185">Reference proteome</keyword>
<keyword id="KW-0686">Riboflavin biosynthesis</keyword>
<keyword id="KW-0808">Transferase</keyword>
<accession>Q6LU12</accession>
<proteinExistence type="inferred from homology"/>
<organism>
    <name type="scientific">Photobacterium profundum (strain SS9)</name>
    <dbReference type="NCBI Taxonomy" id="298386"/>
    <lineage>
        <taxon>Bacteria</taxon>
        <taxon>Pseudomonadati</taxon>
        <taxon>Pseudomonadota</taxon>
        <taxon>Gammaproteobacteria</taxon>
        <taxon>Vibrionales</taxon>
        <taxon>Vibrionaceae</taxon>
        <taxon>Photobacterium</taxon>
    </lineage>
</organism>